<comment type="function">
    <text evidence="1">The 26S proteasome is involved in the ATP-dependent degradation of ubiquitinated proteins. The regulatory (or ATPase) complex confers ATP dependency and substrate specificity to the 26S complex (By similarity).</text>
</comment>
<comment type="interaction">
    <interactant intactId="EBI-320304">
        <id>O17071</id>
    </interactant>
    <interactant intactId="EBI-320304">
        <id>O17071</id>
        <label>rpt-4</label>
    </interactant>
    <organismsDiffer>false</organismsDiffer>
    <experiments>4</experiments>
</comment>
<comment type="interaction">
    <interactant intactId="EBI-320304">
        <id>O17071</id>
    </interactant>
    <interactant intactId="EBI-317201">
        <id>O76371</id>
        <label>rpt-5</label>
    </interactant>
    <organismsDiffer>false</organismsDiffer>
    <experiments>10</experiments>
</comment>
<comment type="subcellular location">
    <subcellularLocation>
        <location evidence="1">Cytoplasm</location>
    </subcellularLocation>
    <subcellularLocation>
        <location evidence="1">Nucleus</location>
    </subcellularLocation>
</comment>
<comment type="alternative products">
    <event type="alternative splicing"/>
    <isoform>
        <id>O17071-1</id>
        <name>a</name>
        <sequence type="displayed"/>
    </isoform>
    <isoform>
        <id>O17071-2</id>
        <name>b</name>
        <sequence type="described" ref="VSP_015558"/>
    </isoform>
</comment>
<comment type="similarity">
    <text evidence="3">Belongs to the AAA ATPase family.</text>
</comment>
<name>PRS10_CAEEL</name>
<sequence>MLLLQFSNMVEPTGPAIVEDERTKALNSYRRKLAECRDIEQKLKDLRKKESEMTKQFDKSENDIKSLQSVGQIVGEVLKQLSEEKFIVKATNGPRYVVGCRRSINKEELKQGTRVSLDMTTLTIMRQLPREVDPLVYKMSHEDPGNISYSDVGGLAEQIRELREVVELPLINPELFKRVGITPPKGCLLFGPPGTGKTLLARAVASQLDCNFLKVVSSAIVDKYIGESARMIREMFNYARDHQPCIVFMDEIDAIGGRRFSEGTSADREIQRTLMELLNQLDGFDSLGKVKVIMATNRPDTLDPALLRPGRLDRKIEIGLPNEQSRLEILKIHSNKITKHGEIDFEAVVKLSDGFSAADLRNVCTEAGMFAIRAEREFVIDEDFMKAVRKVGDAKRLETKLDYKPV</sequence>
<organism>
    <name type="scientific">Caenorhabditis elegans</name>
    <dbReference type="NCBI Taxonomy" id="6239"/>
    <lineage>
        <taxon>Eukaryota</taxon>
        <taxon>Metazoa</taxon>
        <taxon>Ecdysozoa</taxon>
        <taxon>Nematoda</taxon>
        <taxon>Chromadorea</taxon>
        <taxon>Rhabditida</taxon>
        <taxon>Rhabditina</taxon>
        <taxon>Rhabditomorpha</taxon>
        <taxon>Rhabditoidea</taxon>
        <taxon>Rhabditidae</taxon>
        <taxon>Peloderinae</taxon>
        <taxon>Caenorhabditis</taxon>
    </lineage>
</organism>
<protein>
    <recommendedName>
        <fullName>Probable 26S proteasome regulatory subunit 10B</fullName>
    </recommendedName>
    <alternativeName>
        <fullName>26S proteasome AAA-ATPase subunit rpt-4</fullName>
    </alternativeName>
    <alternativeName>
        <fullName>Proteasome regulatory particle ATPase-like protein 4</fullName>
    </alternativeName>
</protein>
<gene>
    <name type="primary">rpt-4</name>
    <name type="ORF">F23F1.8</name>
</gene>
<accession>O17071</accession>
<accession>Q5F4U7</accession>
<feature type="chain" id="PRO_0000084735" description="Probable 26S proteasome regulatory subunit 10B">
    <location>
        <begin position="1"/>
        <end position="406"/>
    </location>
</feature>
<feature type="binding site" evidence="2">
    <location>
        <begin position="191"/>
        <end position="198"/>
    </location>
    <ligand>
        <name>ATP</name>
        <dbReference type="ChEBI" id="CHEBI:30616"/>
    </ligand>
</feature>
<feature type="splice variant" id="VSP_015558" description="In isoform b." evidence="3">
    <location>
        <begin position="1"/>
        <end position="8"/>
    </location>
</feature>
<keyword id="KW-0025">Alternative splicing</keyword>
<keyword id="KW-0067">ATP-binding</keyword>
<keyword id="KW-0963">Cytoplasm</keyword>
<keyword id="KW-0547">Nucleotide-binding</keyword>
<keyword id="KW-0539">Nucleus</keyword>
<keyword id="KW-0647">Proteasome</keyword>
<keyword id="KW-1185">Reference proteome</keyword>
<proteinExistence type="evidence at protein level"/>
<reference key="1">
    <citation type="journal article" date="1998" name="Science">
        <title>Genome sequence of the nematode C. elegans: a platform for investigating biology.</title>
        <authorList>
            <consortium name="The C. elegans sequencing consortium"/>
        </authorList>
    </citation>
    <scope>NUCLEOTIDE SEQUENCE [LARGE SCALE GENOMIC DNA]</scope>
    <scope>ALTERNATIVE SPLICING</scope>
    <source>
        <strain>Bristol N2</strain>
    </source>
</reference>
<dbReference type="EMBL" id="FO080251">
    <property type="protein sequence ID" value="CCD62357.1"/>
    <property type="molecule type" value="Genomic_DNA"/>
</dbReference>
<dbReference type="EMBL" id="FO080251">
    <property type="protein sequence ID" value="CCD62358.1"/>
    <property type="molecule type" value="Genomic_DNA"/>
</dbReference>
<dbReference type="PIR" id="T32268">
    <property type="entry name" value="T32268"/>
</dbReference>
<dbReference type="RefSeq" id="NP_001022113.1">
    <molecule id="O17071-1"/>
    <property type="nucleotide sequence ID" value="NM_001026942.5"/>
</dbReference>
<dbReference type="RefSeq" id="NP_001022114.1">
    <molecule id="O17071-2"/>
    <property type="nucleotide sequence ID" value="NM_001026943.5"/>
</dbReference>
<dbReference type="SMR" id="O17071"/>
<dbReference type="BioGRID" id="38764">
    <property type="interactions" value="54"/>
</dbReference>
<dbReference type="FunCoup" id="O17071">
    <property type="interactions" value="2638"/>
</dbReference>
<dbReference type="IntAct" id="O17071">
    <property type="interactions" value="9"/>
</dbReference>
<dbReference type="STRING" id="6239.F23F1.8a.1"/>
<dbReference type="iPTMnet" id="O17071"/>
<dbReference type="PaxDb" id="6239-F23F1.8a"/>
<dbReference type="PeptideAtlas" id="O17071"/>
<dbReference type="EnsemblMetazoa" id="F23F1.8a.1">
    <molecule id="O17071-1"/>
    <property type="protein sequence ID" value="F23F1.8a.1"/>
    <property type="gene ID" value="WBGene00004504"/>
</dbReference>
<dbReference type="EnsemblMetazoa" id="F23F1.8b.1">
    <molecule id="O17071-2"/>
    <property type="protein sequence ID" value="F23F1.8b.1"/>
    <property type="gene ID" value="WBGene00004504"/>
</dbReference>
<dbReference type="GeneID" id="173384"/>
<dbReference type="KEGG" id="cel:CELE_F23F1.8"/>
<dbReference type="UCSC" id="F23F1.8a">
    <molecule id="O17071-1"/>
    <property type="organism name" value="c. elegans"/>
</dbReference>
<dbReference type="AGR" id="WB:WBGene00004504"/>
<dbReference type="CTD" id="173384"/>
<dbReference type="WormBase" id="F23F1.8a">
    <molecule id="O17071-1"/>
    <property type="protein sequence ID" value="CE29280"/>
    <property type="gene ID" value="WBGene00004504"/>
    <property type="gene designation" value="rpt-4"/>
</dbReference>
<dbReference type="WormBase" id="F23F1.8b">
    <molecule id="O17071-2"/>
    <property type="protein sequence ID" value="CE09608"/>
    <property type="gene ID" value="WBGene00004504"/>
    <property type="gene designation" value="rpt-4"/>
</dbReference>
<dbReference type="eggNOG" id="KOG0651">
    <property type="taxonomic scope" value="Eukaryota"/>
</dbReference>
<dbReference type="GeneTree" id="ENSGT01020000230346"/>
<dbReference type="InParanoid" id="O17071"/>
<dbReference type="OMA" id="DHEPCVI"/>
<dbReference type="OrthoDB" id="1937997at2759"/>
<dbReference type="PhylomeDB" id="O17071"/>
<dbReference type="Reactome" id="R-CEL-1234176">
    <property type="pathway name" value="Oxygen-dependent proline hydroxylation of Hypoxia-inducible Factor Alpha"/>
</dbReference>
<dbReference type="Reactome" id="R-CEL-1236978">
    <property type="pathway name" value="Cross-presentation of soluble exogenous antigens (endosomes)"/>
</dbReference>
<dbReference type="Reactome" id="R-CEL-187577">
    <property type="pathway name" value="SCF(Skp2)-mediated degradation of p27/p21"/>
</dbReference>
<dbReference type="Reactome" id="R-CEL-195253">
    <property type="pathway name" value="Degradation of beta-catenin by the destruction complex"/>
</dbReference>
<dbReference type="Reactome" id="R-CEL-349425">
    <property type="pathway name" value="Autodegradation of the E3 ubiquitin ligase COP1"/>
</dbReference>
<dbReference type="Reactome" id="R-CEL-350562">
    <property type="pathway name" value="Regulation of ornithine decarboxylase (ODC)"/>
</dbReference>
<dbReference type="Reactome" id="R-CEL-382556">
    <property type="pathway name" value="ABC-family proteins mediated transport"/>
</dbReference>
<dbReference type="Reactome" id="R-CEL-4608870">
    <property type="pathway name" value="Asymmetric localization of PCP proteins"/>
</dbReference>
<dbReference type="Reactome" id="R-CEL-4641258">
    <property type="pathway name" value="Degradation of DVL"/>
</dbReference>
<dbReference type="Reactome" id="R-CEL-5632684">
    <property type="pathway name" value="Hedgehog 'on' state"/>
</dbReference>
<dbReference type="Reactome" id="R-CEL-5687128">
    <property type="pathway name" value="MAPK6/MAPK4 signaling"/>
</dbReference>
<dbReference type="Reactome" id="R-CEL-5689603">
    <property type="pathway name" value="UCH proteinases"/>
</dbReference>
<dbReference type="Reactome" id="R-CEL-5689880">
    <property type="pathway name" value="Ub-specific processing proteases"/>
</dbReference>
<dbReference type="Reactome" id="R-CEL-68949">
    <property type="pathway name" value="Orc1 removal from chromatin"/>
</dbReference>
<dbReference type="Reactome" id="R-CEL-69017">
    <property type="pathway name" value="CDK-mediated phosphorylation and removal of Cdc6"/>
</dbReference>
<dbReference type="Reactome" id="R-CEL-69601">
    <property type="pathway name" value="Ubiquitin Mediated Degradation of Phosphorylated Cdc25A"/>
</dbReference>
<dbReference type="Reactome" id="R-CEL-75815">
    <property type="pathway name" value="Ubiquitin-dependent degradation of Cyclin D"/>
</dbReference>
<dbReference type="Reactome" id="R-CEL-8854050">
    <property type="pathway name" value="FBXL7 down-regulates AURKA during mitotic entry and in early mitosis"/>
</dbReference>
<dbReference type="Reactome" id="R-CEL-8939902">
    <property type="pathway name" value="Regulation of RUNX2 expression and activity"/>
</dbReference>
<dbReference type="Reactome" id="R-CEL-8941858">
    <property type="pathway name" value="Regulation of RUNX3 expression and activity"/>
</dbReference>
<dbReference type="Reactome" id="R-CEL-8948751">
    <property type="pathway name" value="Regulation of PTEN stability and activity"/>
</dbReference>
<dbReference type="Reactome" id="R-CEL-8951664">
    <property type="pathway name" value="Neddylation"/>
</dbReference>
<dbReference type="Reactome" id="R-CEL-9755511">
    <property type="pathway name" value="KEAP1-NFE2L2 pathway"/>
</dbReference>
<dbReference type="Reactome" id="R-CEL-9762114">
    <property type="pathway name" value="GSK3B and BTRC:CUL1-mediated-degradation of NFE2L2"/>
</dbReference>
<dbReference type="Reactome" id="R-CEL-983168">
    <property type="pathway name" value="Antigen processing: Ubiquitination &amp; Proteasome degradation"/>
</dbReference>
<dbReference type="Reactome" id="R-CEL-9907900">
    <property type="pathway name" value="Proteasome assembly"/>
</dbReference>
<dbReference type="PRO" id="PR:O17071"/>
<dbReference type="Proteomes" id="UP000001940">
    <property type="component" value="Chromosome II"/>
</dbReference>
<dbReference type="Bgee" id="WBGene00004504">
    <property type="expression patterns" value="Expressed in germ line (C elegans) and 4 other cell types or tissues"/>
</dbReference>
<dbReference type="GO" id="GO:0005737">
    <property type="term" value="C:cytoplasm"/>
    <property type="evidence" value="ECO:0007669"/>
    <property type="project" value="UniProtKB-SubCell"/>
</dbReference>
<dbReference type="GO" id="GO:0005634">
    <property type="term" value="C:nucleus"/>
    <property type="evidence" value="ECO:0007669"/>
    <property type="project" value="UniProtKB-SubCell"/>
</dbReference>
<dbReference type="GO" id="GO:0008540">
    <property type="term" value="C:proteasome regulatory particle, base subcomplex"/>
    <property type="evidence" value="ECO:0000250"/>
    <property type="project" value="WormBase"/>
</dbReference>
<dbReference type="GO" id="GO:0005524">
    <property type="term" value="F:ATP binding"/>
    <property type="evidence" value="ECO:0007669"/>
    <property type="project" value="UniProtKB-KW"/>
</dbReference>
<dbReference type="GO" id="GO:0016887">
    <property type="term" value="F:ATP hydrolysis activity"/>
    <property type="evidence" value="ECO:0007669"/>
    <property type="project" value="InterPro"/>
</dbReference>
<dbReference type="GO" id="GO:0042802">
    <property type="term" value="F:identical protein binding"/>
    <property type="evidence" value="ECO:0000353"/>
    <property type="project" value="IntAct"/>
</dbReference>
<dbReference type="GO" id="GO:0036402">
    <property type="term" value="F:proteasome-activating activity"/>
    <property type="evidence" value="ECO:0000318"/>
    <property type="project" value="GO_Central"/>
</dbReference>
<dbReference type="GO" id="GO:0036503">
    <property type="term" value="P:ERAD pathway"/>
    <property type="evidence" value="ECO:0000318"/>
    <property type="project" value="GO_Central"/>
</dbReference>
<dbReference type="GO" id="GO:0045899">
    <property type="term" value="P:positive regulation of RNA polymerase II transcription preinitiation complex assembly"/>
    <property type="evidence" value="ECO:0000318"/>
    <property type="project" value="GO_Central"/>
</dbReference>
<dbReference type="GO" id="GO:0043161">
    <property type="term" value="P:proteasome-mediated ubiquitin-dependent protein catabolic process"/>
    <property type="evidence" value="ECO:0000315"/>
    <property type="project" value="UniProtKB"/>
</dbReference>
<dbReference type="GO" id="GO:0031647">
    <property type="term" value="P:regulation of protein stability"/>
    <property type="evidence" value="ECO:0000315"/>
    <property type="project" value="UniProtKB"/>
</dbReference>
<dbReference type="CDD" id="cd19502">
    <property type="entry name" value="RecA-like_PAN_like"/>
    <property type="match status" value="1"/>
</dbReference>
<dbReference type="FunFam" id="1.10.8.60:FF:000008">
    <property type="entry name" value="26S protease regulatory subunit 10B"/>
    <property type="match status" value="1"/>
</dbReference>
<dbReference type="FunFam" id="2.40.50.140:FF:000027">
    <property type="entry name" value="26S protease regulatory subunit 10B"/>
    <property type="match status" value="1"/>
</dbReference>
<dbReference type="FunFam" id="3.40.50.300:FF:000034">
    <property type="entry name" value="26S protease regulatory subunit 10B"/>
    <property type="match status" value="1"/>
</dbReference>
<dbReference type="Gene3D" id="1.10.8.60">
    <property type="match status" value="1"/>
</dbReference>
<dbReference type="Gene3D" id="2.40.50.140">
    <property type="entry name" value="Nucleic acid-binding proteins"/>
    <property type="match status" value="1"/>
</dbReference>
<dbReference type="Gene3D" id="3.40.50.300">
    <property type="entry name" value="P-loop containing nucleotide triphosphate hydrolases"/>
    <property type="match status" value="1"/>
</dbReference>
<dbReference type="InterPro" id="IPR050221">
    <property type="entry name" value="26S_Proteasome_ATPase"/>
</dbReference>
<dbReference type="InterPro" id="IPR003593">
    <property type="entry name" value="AAA+_ATPase"/>
</dbReference>
<dbReference type="InterPro" id="IPR041569">
    <property type="entry name" value="AAA_lid_3"/>
</dbReference>
<dbReference type="InterPro" id="IPR003959">
    <property type="entry name" value="ATPase_AAA_core"/>
</dbReference>
<dbReference type="InterPro" id="IPR003960">
    <property type="entry name" value="ATPase_AAA_CS"/>
</dbReference>
<dbReference type="InterPro" id="IPR012340">
    <property type="entry name" value="NA-bd_OB-fold"/>
</dbReference>
<dbReference type="InterPro" id="IPR027417">
    <property type="entry name" value="P-loop_NTPase"/>
</dbReference>
<dbReference type="InterPro" id="IPR032501">
    <property type="entry name" value="Prot_ATP_ID_OB_2nd"/>
</dbReference>
<dbReference type="PANTHER" id="PTHR23073">
    <property type="entry name" value="26S PROTEASOME REGULATORY SUBUNIT"/>
    <property type="match status" value="1"/>
</dbReference>
<dbReference type="Pfam" id="PF00004">
    <property type="entry name" value="AAA"/>
    <property type="match status" value="1"/>
</dbReference>
<dbReference type="Pfam" id="PF17862">
    <property type="entry name" value="AAA_lid_3"/>
    <property type="match status" value="1"/>
</dbReference>
<dbReference type="Pfam" id="PF16450">
    <property type="entry name" value="Prot_ATP_ID_OB_C"/>
    <property type="match status" value="1"/>
</dbReference>
<dbReference type="SMART" id="SM00382">
    <property type="entry name" value="AAA"/>
    <property type="match status" value="1"/>
</dbReference>
<dbReference type="SUPFAM" id="SSF52540">
    <property type="entry name" value="P-loop containing nucleoside triphosphate hydrolases"/>
    <property type="match status" value="1"/>
</dbReference>
<dbReference type="PROSITE" id="PS00674">
    <property type="entry name" value="AAA"/>
    <property type="match status" value="1"/>
</dbReference>
<evidence type="ECO:0000250" key="1"/>
<evidence type="ECO:0000255" key="2"/>
<evidence type="ECO:0000305" key="3"/>